<accession>A6QHI6</accession>
<gene>
    <name evidence="1" type="primary">obg</name>
    <name type="ordered locus">NWMN_1546</name>
</gene>
<proteinExistence type="inferred from homology"/>
<protein>
    <recommendedName>
        <fullName evidence="1">GTPase Obg</fullName>
        <ecNumber evidence="1">3.6.5.-</ecNumber>
    </recommendedName>
    <alternativeName>
        <fullName evidence="1">GTP-binding protein Obg</fullName>
    </alternativeName>
</protein>
<organism>
    <name type="scientific">Staphylococcus aureus (strain Newman)</name>
    <dbReference type="NCBI Taxonomy" id="426430"/>
    <lineage>
        <taxon>Bacteria</taxon>
        <taxon>Bacillati</taxon>
        <taxon>Bacillota</taxon>
        <taxon>Bacilli</taxon>
        <taxon>Bacillales</taxon>
        <taxon>Staphylococcaceae</taxon>
        <taxon>Staphylococcus</taxon>
    </lineage>
</organism>
<evidence type="ECO:0000255" key="1">
    <source>
        <dbReference type="HAMAP-Rule" id="MF_01454"/>
    </source>
</evidence>
<evidence type="ECO:0000255" key="2">
    <source>
        <dbReference type="PROSITE-ProRule" id="PRU01229"/>
    </source>
</evidence>
<evidence type="ECO:0000255" key="3">
    <source>
        <dbReference type="PROSITE-ProRule" id="PRU01231"/>
    </source>
</evidence>
<evidence type="ECO:0000256" key="4">
    <source>
        <dbReference type="SAM" id="MobiDB-lite"/>
    </source>
</evidence>
<comment type="function">
    <text evidence="1">An essential GTPase which binds GTP, GDP and possibly (p)ppGpp with moderate affinity, with high nucleotide exchange rates and a fairly low GTP hydrolysis rate. Plays a role in control of the cell cycle, stress response, ribosome biogenesis and in those bacteria that undergo differentiation, in morphogenesis control.</text>
</comment>
<comment type="cofactor">
    <cofactor evidence="1">
        <name>Mg(2+)</name>
        <dbReference type="ChEBI" id="CHEBI:18420"/>
    </cofactor>
</comment>
<comment type="subunit">
    <text evidence="1">Monomer.</text>
</comment>
<comment type="subcellular location">
    <subcellularLocation>
        <location evidence="1">Cytoplasm</location>
    </subcellularLocation>
</comment>
<comment type="similarity">
    <text evidence="1">Belongs to the TRAFAC class OBG-HflX-like GTPase superfamily. OBG GTPase family.</text>
</comment>
<feature type="chain" id="PRO_0000386279" description="GTPase Obg">
    <location>
        <begin position="1"/>
        <end position="430"/>
    </location>
</feature>
<feature type="domain" description="Obg" evidence="3">
    <location>
        <begin position="1"/>
        <end position="158"/>
    </location>
</feature>
<feature type="domain" description="OBG-type G" evidence="1">
    <location>
        <begin position="159"/>
        <end position="329"/>
    </location>
</feature>
<feature type="domain" description="OCT" evidence="2">
    <location>
        <begin position="352"/>
        <end position="430"/>
    </location>
</feature>
<feature type="region of interest" description="Disordered" evidence="4">
    <location>
        <begin position="118"/>
        <end position="145"/>
    </location>
</feature>
<feature type="binding site" evidence="1">
    <location>
        <begin position="165"/>
        <end position="172"/>
    </location>
    <ligand>
        <name>GTP</name>
        <dbReference type="ChEBI" id="CHEBI:37565"/>
    </ligand>
</feature>
<feature type="binding site" evidence="1">
    <location>
        <position position="172"/>
    </location>
    <ligand>
        <name>Mg(2+)</name>
        <dbReference type="ChEBI" id="CHEBI:18420"/>
    </ligand>
</feature>
<feature type="binding site" evidence="1">
    <location>
        <begin position="190"/>
        <end position="194"/>
    </location>
    <ligand>
        <name>GTP</name>
        <dbReference type="ChEBI" id="CHEBI:37565"/>
    </ligand>
</feature>
<feature type="binding site" evidence="1">
    <location>
        <position position="192"/>
    </location>
    <ligand>
        <name>Mg(2+)</name>
        <dbReference type="ChEBI" id="CHEBI:18420"/>
    </ligand>
</feature>
<feature type="binding site" evidence="1">
    <location>
        <begin position="212"/>
        <end position="215"/>
    </location>
    <ligand>
        <name>GTP</name>
        <dbReference type="ChEBI" id="CHEBI:37565"/>
    </ligand>
</feature>
<feature type="binding site" evidence="1">
    <location>
        <begin position="282"/>
        <end position="285"/>
    </location>
    <ligand>
        <name>GTP</name>
        <dbReference type="ChEBI" id="CHEBI:37565"/>
    </ligand>
</feature>
<feature type="binding site" evidence="1">
    <location>
        <begin position="310"/>
        <end position="312"/>
    </location>
    <ligand>
        <name>GTP</name>
        <dbReference type="ChEBI" id="CHEBI:37565"/>
    </ligand>
</feature>
<reference key="1">
    <citation type="journal article" date="2008" name="J. Bacteriol.">
        <title>Genome sequence of Staphylococcus aureus strain Newman and comparative analysis of staphylococcal genomes: polymorphism and evolution of two major pathogenicity islands.</title>
        <authorList>
            <person name="Baba T."/>
            <person name="Bae T."/>
            <person name="Schneewind O."/>
            <person name="Takeuchi F."/>
            <person name="Hiramatsu K."/>
        </authorList>
    </citation>
    <scope>NUCLEOTIDE SEQUENCE [LARGE SCALE GENOMIC DNA]</scope>
    <source>
        <strain>Newman</strain>
    </source>
</reference>
<sequence>MFVDQVKISLKAGDGGNGITAYRREKYVPFGGPAGGDGGKGASVVFEVDEGLRTLLDFRYQRHFKASKGENGQSSNMHGKNAEDLVLKVPPGTIIKNVETDEVLADLVEDGQRAVVAKGGRGGRGNSRFATPRNPAPDFSEKGEPGEELDVSLELKLLADVGLVGFPSVGKSTLLSIVSKAKPKIGAYHFTTIKPNLGVVSTPDQRSFVMADLPGLIEGASDGVGLGHQFLRHVERTKVIVHMIDMSGSEGREPIEDYKVINQELAAYEQRLEDRPQIVVANKMDLPESQDNLNLFKEEIGEDVPVIPVSTITRDNIDQLLYAIADKLEEYKDVDFTVEEEESVGINRVLYKHTPSQDKFTISRDDDGAYVVSGNAIERMFKMTDFNSDPAVRRFARQMRSMGIDDALRERGCKNGDIVRILGGEFEFVE</sequence>
<dbReference type="EC" id="3.6.5.-" evidence="1"/>
<dbReference type="EMBL" id="AP009351">
    <property type="protein sequence ID" value="BAF67818.1"/>
    <property type="molecule type" value="Genomic_DNA"/>
</dbReference>
<dbReference type="SMR" id="A6QHI6"/>
<dbReference type="KEGG" id="sae:NWMN_1546"/>
<dbReference type="HOGENOM" id="CLU_011747_2_1_9"/>
<dbReference type="Proteomes" id="UP000006386">
    <property type="component" value="Chromosome"/>
</dbReference>
<dbReference type="GO" id="GO:0005737">
    <property type="term" value="C:cytoplasm"/>
    <property type="evidence" value="ECO:0007669"/>
    <property type="project" value="UniProtKB-SubCell"/>
</dbReference>
<dbReference type="GO" id="GO:0005525">
    <property type="term" value="F:GTP binding"/>
    <property type="evidence" value="ECO:0007669"/>
    <property type="project" value="UniProtKB-UniRule"/>
</dbReference>
<dbReference type="GO" id="GO:0003924">
    <property type="term" value="F:GTPase activity"/>
    <property type="evidence" value="ECO:0007669"/>
    <property type="project" value="UniProtKB-UniRule"/>
</dbReference>
<dbReference type="GO" id="GO:0000287">
    <property type="term" value="F:magnesium ion binding"/>
    <property type="evidence" value="ECO:0007669"/>
    <property type="project" value="InterPro"/>
</dbReference>
<dbReference type="GO" id="GO:0042254">
    <property type="term" value="P:ribosome biogenesis"/>
    <property type="evidence" value="ECO:0007669"/>
    <property type="project" value="UniProtKB-UniRule"/>
</dbReference>
<dbReference type="CDD" id="cd01898">
    <property type="entry name" value="Obg"/>
    <property type="match status" value="1"/>
</dbReference>
<dbReference type="FunFam" id="2.70.210.12:FF:000001">
    <property type="entry name" value="GTPase Obg"/>
    <property type="match status" value="1"/>
</dbReference>
<dbReference type="FunFam" id="3.40.50.300:FF:000515">
    <property type="entry name" value="GTPase Obg"/>
    <property type="match status" value="1"/>
</dbReference>
<dbReference type="Gene3D" id="3.30.300.350">
    <property type="entry name" value="GTP-binding protein OBG, C-terminal domain"/>
    <property type="match status" value="1"/>
</dbReference>
<dbReference type="Gene3D" id="2.70.210.12">
    <property type="entry name" value="GTP1/OBG domain"/>
    <property type="match status" value="1"/>
</dbReference>
<dbReference type="Gene3D" id="3.40.50.300">
    <property type="entry name" value="P-loop containing nucleotide triphosphate hydrolases"/>
    <property type="match status" value="1"/>
</dbReference>
<dbReference type="HAMAP" id="MF_01454">
    <property type="entry name" value="GTPase_Obg"/>
    <property type="match status" value="1"/>
</dbReference>
<dbReference type="InterPro" id="IPR031167">
    <property type="entry name" value="G_OBG"/>
</dbReference>
<dbReference type="InterPro" id="IPR006073">
    <property type="entry name" value="GTP-bd"/>
</dbReference>
<dbReference type="InterPro" id="IPR014100">
    <property type="entry name" value="GTP-bd_Obg/CgtA"/>
</dbReference>
<dbReference type="InterPro" id="IPR036346">
    <property type="entry name" value="GTP-bd_prot_GTP1/OBG_C_sf"/>
</dbReference>
<dbReference type="InterPro" id="IPR006074">
    <property type="entry name" value="GTP1-OBG_CS"/>
</dbReference>
<dbReference type="InterPro" id="IPR006169">
    <property type="entry name" value="GTP1_OBG_dom"/>
</dbReference>
<dbReference type="InterPro" id="IPR036726">
    <property type="entry name" value="GTP1_OBG_dom_sf"/>
</dbReference>
<dbReference type="InterPro" id="IPR045086">
    <property type="entry name" value="OBG_GTPase"/>
</dbReference>
<dbReference type="InterPro" id="IPR015349">
    <property type="entry name" value="OCT_dom"/>
</dbReference>
<dbReference type="InterPro" id="IPR027417">
    <property type="entry name" value="P-loop_NTPase"/>
</dbReference>
<dbReference type="NCBIfam" id="TIGR02729">
    <property type="entry name" value="Obg_CgtA"/>
    <property type="match status" value="1"/>
</dbReference>
<dbReference type="NCBIfam" id="TIGR03595">
    <property type="entry name" value="Obg_CgtA_exten"/>
    <property type="match status" value="1"/>
</dbReference>
<dbReference type="NCBIfam" id="NF008954">
    <property type="entry name" value="PRK12296.1"/>
    <property type="match status" value="1"/>
</dbReference>
<dbReference type="NCBIfam" id="NF008955">
    <property type="entry name" value="PRK12297.1"/>
    <property type="match status" value="1"/>
</dbReference>
<dbReference type="NCBIfam" id="NF008956">
    <property type="entry name" value="PRK12299.1"/>
    <property type="match status" value="1"/>
</dbReference>
<dbReference type="PANTHER" id="PTHR11702">
    <property type="entry name" value="DEVELOPMENTALLY REGULATED GTP-BINDING PROTEIN-RELATED"/>
    <property type="match status" value="1"/>
</dbReference>
<dbReference type="PANTHER" id="PTHR11702:SF31">
    <property type="entry name" value="MITOCHONDRIAL RIBOSOME-ASSOCIATED GTPASE 2"/>
    <property type="match status" value="1"/>
</dbReference>
<dbReference type="Pfam" id="PF09269">
    <property type="entry name" value="DUF1967"/>
    <property type="match status" value="1"/>
</dbReference>
<dbReference type="Pfam" id="PF01018">
    <property type="entry name" value="GTP1_OBG"/>
    <property type="match status" value="1"/>
</dbReference>
<dbReference type="Pfam" id="PF01926">
    <property type="entry name" value="MMR_HSR1"/>
    <property type="match status" value="1"/>
</dbReference>
<dbReference type="PIRSF" id="PIRSF002401">
    <property type="entry name" value="GTP_bd_Obg/CgtA"/>
    <property type="match status" value="1"/>
</dbReference>
<dbReference type="PRINTS" id="PR00326">
    <property type="entry name" value="GTP1OBG"/>
</dbReference>
<dbReference type="SUPFAM" id="SSF102741">
    <property type="entry name" value="Obg GTP-binding protein C-terminal domain"/>
    <property type="match status" value="1"/>
</dbReference>
<dbReference type="SUPFAM" id="SSF82051">
    <property type="entry name" value="Obg GTP-binding protein N-terminal domain"/>
    <property type="match status" value="1"/>
</dbReference>
<dbReference type="SUPFAM" id="SSF52540">
    <property type="entry name" value="P-loop containing nucleoside triphosphate hydrolases"/>
    <property type="match status" value="1"/>
</dbReference>
<dbReference type="PROSITE" id="PS51710">
    <property type="entry name" value="G_OBG"/>
    <property type="match status" value="1"/>
</dbReference>
<dbReference type="PROSITE" id="PS00905">
    <property type="entry name" value="GTP1_OBG"/>
    <property type="match status" value="1"/>
</dbReference>
<dbReference type="PROSITE" id="PS51883">
    <property type="entry name" value="OBG"/>
    <property type="match status" value="1"/>
</dbReference>
<dbReference type="PROSITE" id="PS51881">
    <property type="entry name" value="OCT"/>
    <property type="match status" value="1"/>
</dbReference>
<name>OBG_STAAE</name>
<keyword id="KW-0963">Cytoplasm</keyword>
<keyword id="KW-0342">GTP-binding</keyword>
<keyword id="KW-0378">Hydrolase</keyword>
<keyword id="KW-0460">Magnesium</keyword>
<keyword id="KW-0479">Metal-binding</keyword>
<keyword id="KW-0547">Nucleotide-binding</keyword>